<sequence>MPGVSAHGLSCEERRQLAVDLTRVLALYRSILDAYIIEFFTDSLWGTLPHAWQEVLDGLNPPELATLLLGMPREGEEIRYRSVWPLTLLALKSTACALAFTRTPGFHTPSEFLENPSQSSRLTAPFRKHVKPKKQHEIRRLGELVKKLSDLTGCTQVVDVGSGQGHLSRFMSLGLGLMVKSLEGNKRLVARAQRLDQELLQALDKMEKRHPKMVQRSPRHRPHHVVQWVSPTTLCEELLLPLEMPGQSSTRLLLTGLHACGDLSVALLRHFCCCPEVVALASVGCCYMKLSDPGSYPLSQWVAGLPGHELPYRLREGACHALEDYAERLQKAGPGLQTHCFRAALEAVIRQVCPELRRPGVQGIPRVHELKIEEYVQQGLQRVGLDPQLPLDQAALQAHQAQENRVVAFFSLALLLAPLVETLILLDRMLYLQEQGFYAELLPIFSPELSPRNLVLVATKTPLGQAFSILETEDS</sequence>
<proteinExistence type="evidence at transcript level"/>
<protein>
    <recommendedName>
        <fullName>Methyltransferase-like protein 25B</fullName>
    </recommendedName>
    <alternativeName>
        <fullName evidence="1">Protein RRNAD1</fullName>
    </alternativeName>
</protein>
<dbReference type="EMBL" id="BC079059">
    <property type="protein sequence ID" value="AAH79059.1"/>
    <property type="molecule type" value="mRNA"/>
</dbReference>
<dbReference type="RefSeq" id="NP_001014195.1">
    <property type="nucleotide sequence ID" value="NM_001014173.2"/>
</dbReference>
<dbReference type="FunCoup" id="Q6AYG0">
    <property type="interactions" value="1853"/>
</dbReference>
<dbReference type="STRING" id="10116.ENSRNOP00000015793"/>
<dbReference type="PhosphoSitePlus" id="Q6AYG0"/>
<dbReference type="PaxDb" id="10116-ENSRNOP00000015793"/>
<dbReference type="Ensembl" id="ENSRNOT00000015793.5">
    <property type="protein sequence ID" value="ENSRNOP00000015793.4"/>
    <property type="gene ID" value="ENSRNOG00000011645.5"/>
</dbReference>
<dbReference type="GeneID" id="361976"/>
<dbReference type="KEGG" id="rno:361976"/>
<dbReference type="UCSC" id="RGD:1311265">
    <property type="organism name" value="rat"/>
</dbReference>
<dbReference type="AGR" id="RGD:1311265"/>
<dbReference type="CTD" id="51093"/>
<dbReference type="RGD" id="1311265">
    <property type="gene designation" value="Mettl25b"/>
</dbReference>
<dbReference type="eggNOG" id="KOG2651">
    <property type="taxonomic scope" value="Eukaryota"/>
</dbReference>
<dbReference type="GeneTree" id="ENSGT00530000063745"/>
<dbReference type="HOGENOM" id="CLU_016581_3_0_1"/>
<dbReference type="InParanoid" id="Q6AYG0"/>
<dbReference type="OMA" id="IVGLHPC"/>
<dbReference type="OrthoDB" id="5875367at2759"/>
<dbReference type="PhylomeDB" id="Q6AYG0"/>
<dbReference type="TreeFam" id="TF312998"/>
<dbReference type="PRO" id="PR:Q6AYG0"/>
<dbReference type="Proteomes" id="UP000002494">
    <property type="component" value="Chromosome 2"/>
</dbReference>
<dbReference type="Bgee" id="ENSRNOG00000011645">
    <property type="expression patterns" value="Expressed in thymus and 19 other cell types or tissues"/>
</dbReference>
<dbReference type="GO" id="GO:0016020">
    <property type="term" value="C:membrane"/>
    <property type="evidence" value="ECO:0007669"/>
    <property type="project" value="UniProtKB-SubCell"/>
</dbReference>
<dbReference type="InterPro" id="IPR025714">
    <property type="entry name" value="Methyltranfer_dom"/>
</dbReference>
<dbReference type="InterPro" id="IPR052220">
    <property type="entry name" value="METTL25"/>
</dbReference>
<dbReference type="InterPro" id="IPR029063">
    <property type="entry name" value="SAM-dependent_MTases_sf"/>
</dbReference>
<dbReference type="PANTHER" id="PTHR12496">
    <property type="entry name" value="CGI-41 METHYLTRANSFERASE"/>
    <property type="match status" value="1"/>
</dbReference>
<dbReference type="PANTHER" id="PTHR12496:SF2">
    <property type="entry name" value="METHYLTRANSFERASE-LIKE PROTEIN 25B"/>
    <property type="match status" value="1"/>
</dbReference>
<dbReference type="Pfam" id="PF13679">
    <property type="entry name" value="Methyltransf_32"/>
    <property type="match status" value="1"/>
</dbReference>
<dbReference type="SUPFAM" id="SSF53335">
    <property type="entry name" value="S-adenosyl-L-methionine-dependent methyltransferases"/>
    <property type="match status" value="1"/>
</dbReference>
<accession>Q6AYG0</accession>
<gene>
    <name evidence="4" type="primary">Mettl25b</name>
    <name type="synonym">Rrnad1</name>
</gene>
<evidence type="ECO:0000250" key="1">
    <source>
        <dbReference type="UniProtKB" id="Q96FB5"/>
    </source>
</evidence>
<evidence type="ECO:0000255" key="2"/>
<evidence type="ECO:0000305" key="3"/>
<evidence type="ECO:0000312" key="4">
    <source>
        <dbReference type="RGD" id="1311265"/>
    </source>
</evidence>
<feature type="chain" id="PRO_0000289054" description="Methyltransferase-like protein 25B">
    <location>
        <begin position="1"/>
        <end position="475"/>
    </location>
</feature>
<feature type="transmembrane region" description="Helical" evidence="2">
    <location>
        <begin position="406"/>
        <end position="426"/>
    </location>
</feature>
<feature type="coiled-coil region" evidence="2">
    <location>
        <begin position="185"/>
        <end position="210"/>
    </location>
</feature>
<comment type="subcellular location">
    <subcellularLocation>
        <location evidence="3">Membrane</location>
        <topology evidence="3">Single-pass membrane protein</topology>
    </subcellularLocation>
</comment>
<comment type="similarity">
    <text evidence="3">Belongs to the METTL25 family.</text>
</comment>
<reference key="1">
    <citation type="journal article" date="2004" name="Genome Res.">
        <title>The status, quality, and expansion of the NIH full-length cDNA project: the Mammalian Gene Collection (MGC).</title>
        <authorList>
            <consortium name="The MGC Project Team"/>
        </authorList>
    </citation>
    <scope>NUCLEOTIDE SEQUENCE [LARGE SCALE MRNA]</scope>
    <source>
        <tissue>Testis</tissue>
    </source>
</reference>
<keyword id="KW-0175">Coiled coil</keyword>
<keyword id="KW-0472">Membrane</keyword>
<keyword id="KW-1185">Reference proteome</keyword>
<keyword id="KW-0812">Transmembrane</keyword>
<keyword id="KW-1133">Transmembrane helix</keyword>
<organism>
    <name type="scientific">Rattus norvegicus</name>
    <name type="common">Rat</name>
    <dbReference type="NCBI Taxonomy" id="10116"/>
    <lineage>
        <taxon>Eukaryota</taxon>
        <taxon>Metazoa</taxon>
        <taxon>Chordata</taxon>
        <taxon>Craniata</taxon>
        <taxon>Vertebrata</taxon>
        <taxon>Euteleostomi</taxon>
        <taxon>Mammalia</taxon>
        <taxon>Eutheria</taxon>
        <taxon>Euarchontoglires</taxon>
        <taxon>Glires</taxon>
        <taxon>Rodentia</taxon>
        <taxon>Myomorpha</taxon>
        <taxon>Muroidea</taxon>
        <taxon>Muridae</taxon>
        <taxon>Murinae</taxon>
        <taxon>Rattus</taxon>
    </lineage>
</organism>
<name>MT25B_RAT</name>